<name>PDRP_CAUVC</name>
<proteinExistence type="inferred from homology"/>
<organism>
    <name type="scientific">Caulobacter vibrioides (strain ATCC 19089 / CIP 103742 / CB 15)</name>
    <name type="common">Caulobacter crescentus</name>
    <dbReference type="NCBI Taxonomy" id="190650"/>
    <lineage>
        <taxon>Bacteria</taxon>
        <taxon>Pseudomonadati</taxon>
        <taxon>Pseudomonadota</taxon>
        <taxon>Alphaproteobacteria</taxon>
        <taxon>Caulobacterales</taxon>
        <taxon>Caulobacteraceae</taxon>
        <taxon>Caulobacter</taxon>
    </lineage>
</organism>
<protein>
    <recommendedName>
        <fullName evidence="1">Putative pyruvate, phosphate dikinase regulatory protein</fullName>
        <shortName evidence="1">PPDK regulatory protein</shortName>
        <ecNumber evidence="1">2.7.11.32</ecNumber>
        <ecNumber evidence="1">2.7.4.27</ecNumber>
    </recommendedName>
</protein>
<accession>Q9AC59</accession>
<feature type="chain" id="PRO_0000196643" description="Putative pyruvate, phosphate dikinase regulatory protein">
    <location>
        <begin position="1"/>
        <end position="315"/>
    </location>
</feature>
<feature type="region of interest" description="Disordered" evidence="2">
    <location>
        <begin position="1"/>
        <end position="32"/>
    </location>
</feature>
<feature type="binding site" evidence="1">
    <location>
        <begin position="189"/>
        <end position="196"/>
    </location>
    <ligand>
        <name>ADP</name>
        <dbReference type="ChEBI" id="CHEBI:456216"/>
    </ligand>
</feature>
<keyword id="KW-0418">Kinase</keyword>
<keyword id="KW-0547">Nucleotide-binding</keyword>
<keyword id="KW-1185">Reference proteome</keyword>
<keyword id="KW-0723">Serine/threonine-protein kinase</keyword>
<keyword id="KW-0808">Transferase</keyword>
<evidence type="ECO:0000255" key="1">
    <source>
        <dbReference type="HAMAP-Rule" id="MF_00921"/>
    </source>
</evidence>
<evidence type="ECO:0000256" key="2">
    <source>
        <dbReference type="SAM" id="MobiDB-lite"/>
    </source>
</evidence>
<reference key="1">
    <citation type="journal article" date="2001" name="Proc. Natl. Acad. Sci. U.S.A.">
        <title>Complete genome sequence of Caulobacter crescentus.</title>
        <authorList>
            <person name="Nierman W.C."/>
            <person name="Feldblyum T.V."/>
            <person name="Laub M.T."/>
            <person name="Paulsen I.T."/>
            <person name="Nelson K.E."/>
            <person name="Eisen J.A."/>
            <person name="Heidelberg J.F."/>
            <person name="Alley M.R.K."/>
            <person name="Ohta N."/>
            <person name="Maddock J.R."/>
            <person name="Potocka I."/>
            <person name="Nelson W.C."/>
            <person name="Newton A."/>
            <person name="Stephens C."/>
            <person name="Phadke N.D."/>
            <person name="Ely B."/>
            <person name="DeBoy R.T."/>
            <person name="Dodson R.J."/>
            <person name="Durkin A.S."/>
            <person name="Gwinn M.L."/>
            <person name="Haft D.H."/>
            <person name="Kolonay J.F."/>
            <person name="Smit J."/>
            <person name="Craven M.B."/>
            <person name="Khouri H.M."/>
            <person name="Shetty J."/>
            <person name="Berry K.J."/>
            <person name="Utterback T.R."/>
            <person name="Tran K."/>
            <person name="Wolf A.M."/>
            <person name="Vamathevan J.J."/>
            <person name="Ermolaeva M.D."/>
            <person name="White O."/>
            <person name="Salzberg S.L."/>
            <person name="Venter J.C."/>
            <person name="Shapiro L."/>
            <person name="Fraser C.M."/>
        </authorList>
    </citation>
    <scope>NUCLEOTIDE SEQUENCE [LARGE SCALE GENOMIC DNA]</scope>
    <source>
        <strain>ATCC 19089 / CIP 103742 / CB 15</strain>
    </source>
</reference>
<comment type="function">
    <text evidence="1">Bifunctional serine/threonine kinase and phosphorylase involved in the regulation of the pyruvate, phosphate dikinase (PPDK) by catalyzing its phosphorylation/dephosphorylation.</text>
</comment>
<comment type="catalytic activity">
    <reaction evidence="1">
        <text>N(tele)-phospho-L-histidyl/L-threonyl-[pyruvate, phosphate dikinase] + ADP = N(tele)-phospho-L-histidyl/O-phospho-L-threonyl-[pyruvate, phosphate dikinase] + AMP + H(+)</text>
        <dbReference type="Rhea" id="RHEA:43692"/>
        <dbReference type="Rhea" id="RHEA-COMP:10650"/>
        <dbReference type="Rhea" id="RHEA-COMP:10651"/>
        <dbReference type="ChEBI" id="CHEBI:15378"/>
        <dbReference type="ChEBI" id="CHEBI:30013"/>
        <dbReference type="ChEBI" id="CHEBI:61977"/>
        <dbReference type="ChEBI" id="CHEBI:83586"/>
        <dbReference type="ChEBI" id="CHEBI:456215"/>
        <dbReference type="ChEBI" id="CHEBI:456216"/>
        <dbReference type="EC" id="2.7.11.32"/>
    </reaction>
</comment>
<comment type="catalytic activity">
    <reaction evidence="1">
        <text>N(tele)-phospho-L-histidyl/O-phospho-L-threonyl-[pyruvate, phosphate dikinase] + phosphate + H(+) = N(tele)-phospho-L-histidyl/L-threonyl-[pyruvate, phosphate dikinase] + diphosphate</text>
        <dbReference type="Rhea" id="RHEA:43696"/>
        <dbReference type="Rhea" id="RHEA-COMP:10650"/>
        <dbReference type="Rhea" id="RHEA-COMP:10651"/>
        <dbReference type="ChEBI" id="CHEBI:15378"/>
        <dbReference type="ChEBI" id="CHEBI:30013"/>
        <dbReference type="ChEBI" id="CHEBI:33019"/>
        <dbReference type="ChEBI" id="CHEBI:43474"/>
        <dbReference type="ChEBI" id="CHEBI:61977"/>
        <dbReference type="ChEBI" id="CHEBI:83586"/>
        <dbReference type="EC" id="2.7.4.27"/>
    </reaction>
</comment>
<comment type="similarity">
    <text evidence="1">Belongs to the pyruvate, phosphate/water dikinase regulatory protein family. PDRP subfamily.</text>
</comment>
<gene>
    <name type="ordered locus">CC_0001</name>
</gene>
<dbReference type="EC" id="2.7.11.32" evidence="1"/>
<dbReference type="EC" id="2.7.4.27" evidence="1"/>
<dbReference type="EMBL" id="AE005673">
    <property type="protein sequence ID" value="AAK21989.1"/>
    <property type="molecule type" value="Genomic_DNA"/>
</dbReference>
<dbReference type="PIR" id="A87249">
    <property type="entry name" value="A87249"/>
</dbReference>
<dbReference type="RefSeq" id="NP_418821.1">
    <property type="nucleotide sequence ID" value="NC_002696.2"/>
</dbReference>
<dbReference type="SMR" id="Q9AC59"/>
<dbReference type="STRING" id="190650.CC_0001"/>
<dbReference type="EnsemblBacteria" id="AAK21989">
    <property type="protein sequence ID" value="AAK21989"/>
    <property type="gene ID" value="CC_0001"/>
</dbReference>
<dbReference type="KEGG" id="ccr:CC_0001"/>
<dbReference type="PATRIC" id="fig|190650.5.peg.1"/>
<dbReference type="eggNOG" id="COG1806">
    <property type="taxonomic scope" value="Bacteria"/>
</dbReference>
<dbReference type="HOGENOM" id="CLU_046206_2_0_5"/>
<dbReference type="BioCyc" id="CAULO:CC0001-MONOMER"/>
<dbReference type="Proteomes" id="UP000001816">
    <property type="component" value="Chromosome"/>
</dbReference>
<dbReference type="GO" id="GO:0043531">
    <property type="term" value="F:ADP binding"/>
    <property type="evidence" value="ECO:0007669"/>
    <property type="project" value="UniProtKB-UniRule"/>
</dbReference>
<dbReference type="GO" id="GO:0005524">
    <property type="term" value="F:ATP binding"/>
    <property type="evidence" value="ECO:0007669"/>
    <property type="project" value="InterPro"/>
</dbReference>
<dbReference type="GO" id="GO:0016776">
    <property type="term" value="F:phosphotransferase activity, phosphate group as acceptor"/>
    <property type="evidence" value="ECO:0007669"/>
    <property type="project" value="UniProtKB-UniRule"/>
</dbReference>
<dbReference type="GO" id="GO:0004674">
    <property type="term" value="F:protein serine/threonine kinase activity"/>
    <property type="evidence" value="ECO:0007669"/>
    <property type="project" value="UniProtKB-UniRule"/>
</dbReference>
<dbReference type="HAMAP" id="MF_00921">
    <property type="entry name" value="PDRP"/>
    <property type="match status" value="1"/>
</dbReference>
<dbReference type="InterPro" id="IPR005177">
    <property type="entry name" value="Kinase-pyrophosphorylase"/>
</dbReference>
<dbReference type="InterPro" id="IPR026565">
    <property type="entry name" value="PPDK_reg"/>
</dbReference>
<dbReference type="NCBIfam" id="NF003742">
    <property type="entry name" value="PRK05339.1"/>
    <property type="match status" value="1"/>
</dbReference>
<dbReference type="PANTHER" id="PTHR31756">
    <property type="entry name" value="PYRUVATE, PHOSPHATE DIKINASE REGULATORY PROTEIN 1, CHLOROPLASTIC"/>
    <property type="match status" value="1"/>
</dbReference>
<dbReference type="PANTHER" id="PTHR31756:SF3">
    <property type="entry name" value="PYRUVATE, PHOSPHATE DIKINASE REGULATORY PROTEIN 1, CHLOROPLASTIC"/>
    <property type="match status" value="1"/>
</dbReference>
<dbReference type="Pfam" id="PF03618">
    <property type="entry name" value="Kinase-PPPase"/>
    <property type="match status" value="1"/>
</dbReference>
<sequence>MGPFGARASPEAGQVVKQPLTDDPQESLAQGESERLPPRFATYFHIHLVSDSTGETLNAMARAVCARFTDILPIEHIYALVRSTRQLDRALEEIAGAPGVVMHTIVDPGLRAALEEGCRKLEMPCIAALDPVISAMSRYLGARISTRVGAQHALTNDYFDRIEALDYAIAHDDGQGGQDLTQADVILVGVSRTSKTPTCIYLAHRGVRAANVPLVPGRPPPPELFELKNTLIVGLITSPDRLIQIRRNRLLSLKENRESDYVDADAVRQEIIAARRLFERQNWPVIDITRRSVEETAAAVINLLSGGRGKVEVLG</sequence>